<dbReference type="EMBL" id="D89501">
    <property type="protein sequence ID" value="BAA13971.1"/>
    <property type="molecule type" value="Genomic_DNA"/>
</dbReference>
<dbReference type="EMBL" id="AC106884">
    <property type="status" value="NOT_ANNOTATED_CDS"/>
    <property type="molecule type" value="Genomic_DNA"/>
</dbReference>
<dbReference type="CCDS" id="CCDS34000.1"/>
<dbReference type="PIR" id="JC5572">
    <property type="entry name" value="JC5572"/>
</dbReference>
<dbReference type="RefSeq" id="NP_036522.3">
    <property type="nucleotide sequence ID" value="NM_012390.3"/>
</dbReference>
<dbReference type="RefSeq" id="XP_016863510.1">
    <property type="nucleotide sequence ID" value="XM_017008021.1"/>
</dbReference>
<dbReference type="BioGRID" id="117923">
    <property type="interactions" value="9"/>
</dbReference>
<dbReference type="FunCoup" id="Q99954">
    <property type="interactions" value="2"/>
</dbReference>
<dbReference type="IntAct" id="Q99954">
    <property type="interactions" value="6"/>
</dbReference>
<dbReference type="STRING" id="9606.ENSP00000226460"/>
<dbReference type="GlyGen" id="Q99954">
    <property type="glycosylation" value="2 sites"/>
</dbReference>
<dbReference type="BioMuta" id="SMR3A"/>
<dbReference type="DMDM" id="296452907"/>
<dbReference type="MassIVE" id="Q99954"/>
<dbReference type="PaxDb" id="9606-ENSP00000226460"/>
<dbReference type="PeptideAtlas" id="Q99954"/>
<dbReference type="Antibodypedia" id="44321">
    <property type="antibodies" value="22 antibodies from 11 providers"/>
</dbReference>
<dbReference type="DNASU" id="26952"/>
<dbReference type="Ensembl" id="ENST00000226460.5">
    <property type="protein sequence ID" value="ENSP00000226460.4"/>
    <property type="gene ID" value="ENSG00000109208.5"/>
</dbReference>
<dbReference type="GeneID" id="26952"/>
<dbReference type="KEGG" id="hsa:26952"/>
<dbReference type="MANE-Select" id="ENST00000226460.5">
    <property type="protein sequence ID" value="ENSP00000226460.4"/>
    <property type="RefSeq nucleotide sequence ID" value="NM_012390.4"/>
    <property type="RefSeq protein sequence ID" value="NP_036522.3"/>
</dbReference>
<dbReference type="UCSC" id="uc003hfg.2">
    <property type="organism name" value="human"/>
</dbReference>
<dbReference type="AGR" id="HGNC:19216"/>
<dbReference type="CTD" id="26952"/>
<dbReference type="DisGeNET" id="26952"/>
<dbReference type="GeneCards" id="SMR3A"/>
<dbReference type="HGNC" id="HGNC:19216">
    <property type="gene designation" value="SMR3A"/>
</dbReference>
<dbReference type="HPA" id="ENSG00000109208">
    <property type="expression patterns" value="Tissue enriched (salivary)"/>
</dbReference>
<dbReference type="MIM" id="618340">
    <property type="type" value="gene"/>
</dbReference>
<dbReference type="neXtProt" id="NX_Q99954"/>
<dbReference type="OpenTargets" id="ENSG00000109208"/>
<dbReference type="PharmGKB" id="PA38824"/>
<dbReference type="VEuPathDB" id="HostDB:ENSG00000109208"/>
<dbReference type="eggNOG" id="ENOG502TEGF">
    <property type="taxonomic scope" value="Eukaryota"/>
</dbReference>
<dbReference type="GeneTree" id="ENSGT00980000198815"/>
<dbReference type="HOGENOM" id="CLU_156938_0_0_1"/>
<dbReference type="InParanoid" id="Q99954"/>
<dbReference type="OMA" id="CWKSKEN"/>
<dbReference type="PAN-GO" id="Q99954">
    <property type="GO annotations" value="2 GO annotations based on evolutionary models"/>
</dbReference>
<dbReference type="TreeFam" id="TF338396"/>
<dbReference type="PathwayCommons" id="Q99954"/>
<dbReference type="SignaLink" id="Q99954"/>
<dbReference type="BioGRID-ORCS" id="26952">
    <property type="hits" value="13 hits in 1114 CRISPR screens"/>
</dbReference>
<dbReference type="GenomeRNAi" id="26952"/>
<dbReference type="Pharos" id="Q99954">
    <property type="development level" value="Tbio"/>
</dbReference>
<dbReference type="PRO" id="PR:Q99954"/>
<dbReference type="Proteomes" id="UP000005640">
    <property type="component" value="Chromosome 4"/>
</dbReference>
<dbReference type="RNAct" id="Q99954">
    <property type="molecule type" value="protein"/>
</dbReference>
<dbReference type="Bgee" id="ENSG00000109208">
    <property type="expression patterns" value="Expressed in parotid gland and 16 other cell types or tissues"/>
</dbReference>
<dbReference type="GO" id="GO:0005576">
    <property type="term" value="C:extracellular region"/>
    <property type="evidence" value="ECO:0000304"/>
    <property type="project" value="ProtInc"/>
</dbReference>
<dbReference type="GO" id="GO:0004866">
    <property type="term" value="F:endopeptidase inhibitor activity"/>
    <property type="evidence" value="ECO:0000318"/>
    <property type="project" value="GO_Central"/>
</dbReference>
<dbReference type="GO" id="GO:0051930">
    <property type="term" value="P:regulation of sensory perception of pain"/>
    <property type="evidence" value="ECO:0000318"/>
    <property type="project" value="GO_Central"/>
</dbReference>
<dbReference type="InterPro" id="IPR026288">
    <property type="entry name" value="SMR-like"/>
</dbReference>
<dbReference type="PANTHER" id="PTHR14179">
    <property type="entry name" value="SMR1-RELATED"/>
    <property type="match status" value="1"/>
</dbReference>
<dbReference type="PANTHER" id="PTHR14179:SF11">
    <property type="entry name" value="SUBMAXILLARY GLAND ANDROGEN-REGULATED PROTEIN 3A"/>
    <property type="match status" value="1"/>
</dbReference>
<dbReference type="Pfam" id="PF15621">
    <property type="entry name" value="PROL5-SMR"/>
    <property type="match status" value="1"/>
</dbReference>
<dbReference type="PRINTS" id="PR01217">
    <property type="entry name" value="PRICHEXTENSN"/>
</dbReference>
<name>SMR3A_HUMAN</name>
<protein>
    <recommendedName>
        <fullName>Submaxillary gland androgen-regulated protein 3A</fullName>
    </recommendedName>
    <alternativeName>
        <fullName>Proline-rich protein 5</fullName>
    </alternativeName>
    <alternativeName>
        <fullName>Proline-rich protein PBI</fullName>
    </alternativeName>
</protein>
<sequence length="134" mass="14048">MKSLTWILGLWALAACFTPGESQRGPRGPYPPGPLAPPPPPCFPFGTGFVPPPHPPPYGPGRFPPPLSPPYGPGRIPPSPPPPYGPGRIQSHSLPPPYGPGYPQPPSQPRPYPPGPPFFPVNSPTDPALPTPAP</sequence>
<reference key="1">
    <citation type="journal article" date="1997" name="J. Biochem.">
        <title>Nucleotide sequence of gene PBI encoding a protein homologous to salivary proline-rich protein P-B.</title>
        <authorList>
            <person name="Isemura S."/>
            <person name="Saitoh E."/>
        </authorList>
    </citation>
    <scope>NUCLEOTIDE SEQUENCE [GENOMIC DNA]</scope>
    <scope>VARIANTS ARG-42 AND LEU-132</scope>
</reference>
<reference key="2">
    <citation type="journal article" date="2005" name="Nature">
        <title>Generation and annotation of the DNA sequences of human chromosomes 2 and 4.</title>
        <authorList>
            <person name="Hillier L.W."/>
            <person name="Graves T.A."/>
            <person name="Fulton R.S."/>
            <person name="Fulton L.A."/>
            <person name="Pepin K.H."/>
            <person name="Minx P."/>
            <person name="Wagner-McPherson C."/>
            <person name="Layman D."/>
            <person name="Wylie K."/>
            <person name="Sekhon M."/>
            <person name="Becker M.C."/>
            <person name="Fewell G.A."/>
            <person name="Delehaunty K.D."/>
            <person name="Miner T.L."/>
            <person name="Nash W.E."/>
            <person name="Kremitzki C."/>
            <person name="Oddy L."/>
            <person name="Du H."/>
            <person name="Sun H."/>
            <person name="Bradshaw-Cordum H."/>
            <person name="Ali J."/>
            <person name="Carter J."/>
            <person name="Cordes M."/>
            <person name="Harris A."/>
            <person name="Isak A."/>
            <person name="van Brunt A."/>
            <person name="Nguyen C."/>
            <person name="Du F."/>
            <person name="Courtney L."/>
            <person name="Kalicki J."/>
            <person name="Ozersky P."/>
            <person name="Abbott S."/>
            <person name="Armstrong J."/>
            <person name="Belter E.A."/>
            <person name="Caruso L."/>
            <person name="Cedroni M."/>
            <person name="Cotton M."/>
            <person name="Davidson T."/>
            <person name="Desai A."/>
            <person name="Elliott G."/>
            <person name="Erb T."/>
            <person name="Fronick C."/>
            <person name="Gaige T."/>
            <person name="Haakenson W."/>
            <person name="Haglund K."/>
            <person name="Holmes A."/>
            <person name="Harkins R."/>
            <person name="Kim K."/>
            <person name="Kruchowski S.S."/>
            <person name="Strong C.M."/>
            <person name="Grewal N."/>
            <person name="Goyea E."/>
            <person name="Hou S."/>
            <person name="Levy A."/>
            <person name="Martinka S."/>
            <person name="Mead K."/>
            <person name="McLellan M.D."/>
            <person name="Meyer R."/>
            <person name="Randall-Maher J."/>
            <person name="Tomlinson C."/>
            <person name="Dauphin-Kohlberg S."/>
            <person name="Kozlowicz-Reilly A."/>
            <person name="Shah N."/>
            <person name="Swearengen-Shahid S."/>
            <person name="Snider J."/>
            <person name="Strong J.T."/>
            <person name="Thompson J."/>
            <person name="Yoakum M."/>
            <person name="Leonard S."/>
            <person name="Pearman C."/>
            <person name="Trani L."/>
            <person name="Radionenko M."/>
            <person name="Waligorski J.E."/>
            <person name="Wang C."/>
            <person name="Rock S.M."/>
            <person name="Tin-Wollam A.-M."/>
            <person name="Maupin R."/>
            <person name="Latreille P."/>
            <person name="Wendl M.C."/>
            <person name="Yang S.-P."/>
            <person name="Pohl C."/>
            <person name="Wallis J.W."/>
            <person name="Spieth J."/>
            <person name="Bieri T.A."/>
            <person name="Berkowicz N."/>
            <person name="Nelson J.O."/>
            <person name="Osborne J."/>
            <person name="Ding L."/>
            <person name="Meyer R."/>
            <person name="Sabo A."/>
            <person name="Shotland Y."/>
            <person name="Sinha P."/>
            <person name="Wohldmann P.E."/>
            <person name="Cook L.L."/>
            <person name="Hickenbotham M.T."/>
            <person name="Eldred J."/>
            <person name="Williams D."/>
            <person name="Jones T.A."/>
            <person name="She X."/>
            <person name="Ciccarelli F.D."/>
            <person name="Izaurralde E."/>
            <person name="Taylor J."/>
            <person name="Schmutz J."/>
            <person name="Myers R.M."/>
            <person name="Cox D.R."/>
            <person name="Huang X."/>
            <person name="McPherson J.D."/>
            <person name="Mardis E.R."/>
            <person name="Clifton S.W."/>
            <person name="Warren W.C."/>
            <person name="Chinwalla A.T."/>
            <person name="Eddy S.R."/>
            <person name="Marra M.A."/>
            <person name="Ovcharenko I."/>
            <person name="Furey T.S."/>
            <person name="Miller W."/>
            <person name="Eichler E.E."/>
            <person name="Bork P."/>
            <person name="Suyama M."/>
            <person name="Torrents D."/>
            <person name="Waterston R.H."/>
            <person name="Wilson R.K."/>
        </authorList>
    </citation>
    <scope>NUCLEOTIDE SEQUENCE [LARGE SCALE GENOMIC DNA]</scope>
</reference>
<proteinExistence type="evidence at protein level"/>
<accession>Q99954</accession>
<organism>
    <name type="scientific">Homo sapiens</name>
    <name type="common">Human</name>
    <dbReference type="NCBI Taxonomy" id="9606"/>
    <lineage>
        <taxon>Eukaryota</taxon>
        <taxon>Metazoa</taxon>
        <taxon>Chordata</taxon>
        <taxon>Craniata</taxon>
        <taxon>Vertebrata</taxon>
        <taxon>Euteleostomi</taxon>
        <taxon>Mammalia</taxon>
        <taxon>Eutheria</taxon>
        <taxon>Euarchontoglires</taxon>
        <taxon>Primates</taxon>
        <taxon>Haplorrhini</taxon>
        <taxon>Catarrhini</taxon>
        <taxon>Hominidae</taxon>
        <taxon>Homo</taxon>
    </lineage>
</organism>
<comment type="function">
    <text evidence="1">May play a role in protection or detoxification.</text>
</comment>
<comment type="interaction">
    <interactant intactId="EBI-12067698">
        <id>Q99954</id>
    </interactant>
    <interactant intactId="EBI-12020132">
        <id>Q7Z4W3</id>
        <label>KRTAP19-3</label>
    </interactant>
    <organismsDiffer>false</organismsDiffer>
    <experiments>3</experiments>
</comment>
<comment type="interaction">
    <interactant intactId="EBI-12067698">
        <id>Q99954</id>
    </interactant>
    <interactant intactId="EBI-10261141">
        <id>Q8IUC2</id>
        <label>KRTAP8-1</label>
    </interactant>
    <organismsDiffer>false</organismsDiffer>
    <experiments>3</experiments>
</comment>
<comment type="interaction">
    <interactant intactId="EBI-12067698">
        <id>Q99954</id>
    </interactant>
    <interactant intactId="EBI-12040603">
        <id>Q9NZC7-5</id>
        <label>WWOX</label>
    </interactant>
    <organismsDiffer>false</organismsDiffer>
    <experiments>3</experiments>
</comment>
<comment type="interaction">
    <interactant intactId="EBI-12067698">
        <id>Q99954</id>
    </interactant>
    <interactant intactId="EBI-743923">
        <id>O00308</id>
        <label>WWP2</label>
    </interactant>
    <organismsDiffer>false</organismsDiffer>
    <experiments>3</experiments>
</comment>
<comment type="subcellular location">
    <subcellularLocation>
        <location evidence="5">Secreted</location>
    </subcellularLocation>
</comment>
<comment type="similarity">
    <text evidence="5">Belongs to the PROL1/PROL3 family.</text>
</comment>
<keyword id="KW-1267">Proteomics identification</keyword>
<keyword id="KW-1185">Reference proteome</keyword>
<keyword id="KW-0677">Repeat</keyword>
<keyword id="KW-0964">Secreted</keyword>
<keyword id="KW-0732">Signal</keyword>
<evidence type="ECO:0000250" key="1"/>
<evidence type="ECO:0000255" key="2"/>
<evidence type="ECO:0000256" key="3">
    <source>
        <dbReference type="SAM" id="MobiDB-lite"/>
    </source>
</evidence>
<evidence type="ECO:0000269" key="4">
    <source>
    </source>
</evidence>
<evidence type="ECO:0000305" key="5"/>
<gene>
    <name type="primary">SMR3A</name>
    <name type="synonym">PBI</name>
    <name type="synonym">PROL5</name>
</gene>
<feature type="signal peptide" evidence="2">
    <location>
        <begin position="1"/>
        <end position="22"/>
    </location>
</feature>
<feature type="chain" id="PRO_0000022116" description="Submaxillary gland androgen-regulated protein 3A">
    <location>
        <begin position="23"/>
        <end position="134"/>
    </location>
</feature>
<feature type="region of interest" description="Disordered" evidence="3">
    <location>
        <begin position="19"/>
        <end position="134"/>
    </location>
</feature>
<feature type="compositionally biased region" description="Pro residues" evidence="3">
    <location>
        <begin position="28"/>
        <end position="43"/>
    </location>
</feature>
<feature type="compositionally biased region" description="Pro residues" evidence="3">
    <location>
        <begin position="50"/>
        <end position="85"/>
    </location>
</feature>
<feature type="compositionally biased region" description="Pro residues" evidence="3">
    <location>
        <begin position="94"/>
        <end position="119"/>
    </location>
</feature>
<feature type="sequence variant" id="VAR_056989" description="In dbSNP:rs10031844.">
    <original>G</original>
    <variation>R</variation>
    <location>
        <position position="28"/>
    </location>
</feature>
<feature type="sequence variant" id="VAR_060392" description="In dbSNP:rs10024123." evidence="4">
    <original>C</original>
    <variation>R</variation>
    <location>
        <position position="42"/>
    </location>
</feature>
<feature type="sequence variant" id="VAR_060393" description="In dbSNP:rs6853742." evidence="4">
    <original>P</original>
    <variation>L</variation>
    <location>
        <position position="132"/>
    </location>
</feature>